<comment type="function">
    <text evidence="1">May be involved in transcriptional regulation.</text>
</comment>
<comment type="subcellular location">
    <subcellularLocation>
        <location evidence="6">Nucleus</location>
    </subcellularLocation>
</comment>
<comment type="similarity">
    <text evidence="6">Belongs to the krueppel C2H2-type zinc-finger protein family.</text>
</comment>
<comment type="sequence caution" evidence="6">
    <conflict type="erroneous initiation">
        <sequence resource="EMBL-CDS" id="BAC67660"/>
    </conflict>
    <text>Extended N-terminus.</text>
</comment>
<comment type="sequence caution" evidence="6">
    <conflict type="erroneous initiation">
        <sequence resource="EMBL-CDS" id="BAD18456"/>
    </conflict>
    <text>Truncated N-terminus.</text>
</comment>
<comment type="sequence caution" evidence="6">
    <conflict type="miscellaneous discrepancy">
        <sequence resource="EMBL-CDS" id="BAD18456"/>
    </conflict>
    <text>Aberrant splicing in the N-terminal part.</text>
</comment>
<feature type="chain" id="PRO_0000306880" description="Zinc finger protein 761">
    <location>
        <begin position="1"/>
        <end position="746"/>
    </location>
</feature>
<feature type="domain" description="KRAB" evidence="3">
    <location>
        <begin position="8"/>
        <end position="81"/>
    </location>
</feature>
<feature type="zinc finger region" description="C2H2-type 1; degenerate" evidence="2">
    <location>
        <begin position="215"/>
        <end position="237"/>
    </location>
</feature>
<feature type="zinc finger region" description="C2H2-type 2" evidence="2">
    <location>
        <begin position="242"/>
        <end position="264"/>
    </location>
</feature>
<feature type="zinc finger region" description="C2H2-type 3" evidence="2">
    <location>
        <begin position="270"/>
        <end position="292"/>
    </location>
</feature>
<feature type="zinc finger region" description="C2H2-type 4" evidence="2">
    <location>
        <begin position="298"/>
        <end position="320"/>
    </location>
</feature>
<feature type="zinc finger region" description="C2H2-type 5" evidence="2">
    <location>
        <begin position="326"/>
        <end position="348"/>
    </location>
</feature>
<feature type="zinc finger region" description="C2H2-type 6" evidence="2">
    <location>
        <begin position="354"/>
        <end position="376"/>
    </location>
</feature>
<feature type="zinc finger region" description="C2H2-type 7" evidence="2">
    <location>
        <begin position="382"/>
        <end position="404"/>
    </location>
</feature>
<feature type="zinc finger region" description="C2H2-type 8" evidence="2">
    <location>
        <begin position="410"/>
        <end position="432"/>
    </location>
</feature>
<feature type="zinc finger region" description="C2H2-type 9" evidence="2">
    <location>
        <begin position="438"/>
        <end position="460"/>
    </location>
</feature>
<feature type="zinc finger region" description="C2H2-type 10" evidence="2">
    <location>
        <begin position="466"/>
        <end position="488"/>
    </location>
</feature>
<feature type="zinc finger region" description="C2H2-type 11" evidence="2">
    <location>
        <begin position="494"/>
        <end position="516"/>
    </location>
</feature>
<feature type="zinc finger region" description="C2H2-type 12" evidence="2">
    <location>
        <begin position="522"/>
        <end position="544"/>
    </location>
</feature>
<feature type="zinc finger region" description="C2H2-type 13" evidence="2">
    <location>
        <begin position="550"/>
        <end position="572"/>
    </location>
</feature>
<feature type="zinc finger region" description="C2H2-type 14; degenerate" evidence="2">
    <location>
        <begin position="578"/>
        <end position="600"/>
    </location>
</feature>
<feature type="zinc finger region" description="C2H2-type 15" evidence="2">
    <location>
        <begin position="606"/>
        <end position="628"/>
    </location>
</feature>
<feature type="zinc finger region" description="C2H2-type 16" evidence="2">
    <location>
        <begin position="634"/>
        <end position="656"/>
    </location>
</feature>
<feature type="zinc finger region" description="C2H2-type 17" evidence="2">
    <location>
        <begin position="662"/>
        <end position="684"/>
    </location>
</feature>
<feature type="zinc finger region" description="C2H2-type 18" evidence="2">
    <location>
        <begin position="690"/>
        <end position="712"/>
    </location>
</feature>
<feature type="zinc finger region" description="C2H2-type 19" evidence="2">
    <location>
        <begin position="718"/>
        <end position="740"/>
    </location>
</feature>
<feature type="cross-link" description="Glycyl lysine isopeptide (Lys-Gly) (interchain with G-Cter in SUMO2)" evidence="7">
    <location>
        <position position="205"/>
    </location>
</feature>
<feature type="sequence variant" id="VAR_035335" description="In dbSNP:rs2708743." evidence="4 5">
    <original>I</original>
    <variation>S</variation>
    <location>
        <position position="122"/>
    </location>
</feature>
<feature type="sequence variant" id="VAR_035336" description="In dbSNP:rs1984432." evidence="4 5">
    <original>V</original>
    <variation>I</variation>
    <location>
        <position position="168"/>
    </location>
</feature>
<feature type="sequence variant" id="VAR_035337" description="In dbSNP:rs2708742." evidence="5">
    <original>G</original>
    <variation>S</variation>
    <location>
        <position position="528"/>
    </location>
</feature>
<feature type="sequence variant" id="VAR_035338" description="In dbSNP:rs2617726." evidence="5">
    <original>E</original>
    <variation>Q</variation>
    <location>
        <position position="603"/>
    </location>
</feature>
<feature type="sequence variant" id="VAR_080210" description="In dbSNP:rs139713552." evidence="5">
    <original>I</original>
    <variation>V</variation>
    <location>
        <position position="678"/>
    </location>
</feature>
<feature type="sequence conflict" description="In Ref. 3; BAD18456." evidence="6" ref="3">
    <original>R</original>
    <variation>S</variation>
    <location>
        <position position="317"/>
    </location>
</feature>
<proteinExistence type="evidence at protein level"/>
<dbReference type="EMBL" id="AB107355">
    <property type="protein sequence ID" value="BAC67660.2"/>
    <property type="status" value="ALT_INIT"/>
    <property type="molecule type" value="mRNA"/>
</dbReference>
<dbReference type="EMBL" id="AC022137">
    <property type="status" value="NOT_ANNOTATED_CDS"/>
    <property type="molecule type" value="Genomic_DNA"/>
</dbReference>
<dbReference type="EMBL" id="KF495723">
    <property type="status" value="NOT_ANNOTATED_CDS"/>
    <property type="molecule type" value="Genomic_DNA"/>
</dbReference>
<dbReference type="EMBL" id="AK131281">
    <property type="protein sequence ID" value="BAD18456.1"/>
    <property type="status" value="ALT_SEQ"/>
    <property type="molecule type" value="mRNA"/>
</dbReference>
<dbReference type="RefSeq" id="NP_001008401.3">
    <property type="nucleotide sequence ID" value="NM_001008401.4"/>
</dbReference>
<dbReference type="RefSeq" id="NP_001276880.1">
    <property type="nucleotide sequence ID" value="NM_001289951.2"/>
</dbReference>
<dbReference type="RefSeq" id="NP_001276881.1">
    <property type="nucleotide sequence ID" value="NM_001289952.1"/>
</dbReference>
<dbReference type="SMR" id="Q86XN6"/>
<dbReference type="BioGRID" id="132744">
    <property type="interactions" value="14"/>
</dbReference>
<dbReference type="FunCoup" id="Q86XN6">
    <property type="interactions" value="59"/>
</dbReference>
<dbReference type="IntAct" id="Q86XN6">
    <property type="interactions" value="6"/>
</dbReference>
<dbReference type="GlyGen" id="Q86XN6">
    <property type="glycosylation" value="1 site, 1 O-linked glycan (1 site)"/>
</dbReference>
<dbReference type="iPTMnet" id="Q86XN6"/>
<dbReference type="PhosphoSitePlus" id="Q86XN6"/>
<dbReference type="BioMuta" id="ZNF761"/>
<dbReference type="DMDM" id="158706491"/>
<dbReference type="jPOST" id="Q86XN6"/>
<dbReference type="MassIVE" id="Q86XN6"/>
<dbReference type="PaxDb" id="9606-ENSP00000480218"/>
<dbReference type="PeptideAtlas" id="Q86XN6"/>
<dbReference type="Pumba" id="Q86XN6"/>
<dbReference type="Antibodypedia" id="81749">
    <property type="antibodies" value="1 antibodies from 1 providers"/>
</dbReference>
<dbReference type="DNASU" id="388561"/>
<dbReference type="Ensembl" id="ENST00000432094.6">
    <property type="protein sequence ID" value="ENSP00000480218.1"/>
    <property type="gene ID" value="ENSG00000160336.17"/>
</dbReference>
<dbReference type="Ensembl" id="ENST00000684525.1">
    <property type="protein sequence ID" value="ENSP00000507666.1"/>
    <property type="gene ID" value="ENSG00000160336.17"/>
</dbReference>
<dbReference type="GeneID" id="388561"/>
<dbReference type="KEGG" id="hsa:388561"/>
<dbReference type="MANE-Select" id="ENST00000684525.1">
    <property type="protein sequence ID" value="ENSP00000507666.1"/>
    <property type="RefSeq nucleotide sequence ID" value="NM_001289951.2"/>
    <property type="RefSeq protein sequence ID" value="NP_001276880.1"/>
</dbReference>
<dbReference type="UCSC" id="uc032icc.1">
    <property type="organism name" value="human"/>
</dbReference>
<dbReference type="AGR" id="HGNC:23179"/>
<dbReference type="CTD" id="388561"/>
<dbReference type="DisGeNET" id="388561"/>
<dbReference type="GeneCards" id="ZNF761"/>
<dbReference type="HGNC" id="HGNC:23179">
    <property type="gene designation" value="ZNF761"/>
</dbReference>
<dbReference type="HPA" id="ENSG00000160336">
    <property type="expression patterns" value="Tissue enriched (prostate)"/>
</dbReference>
<dbReference type="neXtProt" id="NX_Q86XN6"/>
<dbReference type="OpenTargets" id="ENSG00000160336"/>
<dbReference type="PharmGKB" id="PA145149911"/>
<dbReference type="VEuPathDB" id="HostDB:ENSG00000160336"/>
<dbReference type="eggNOG" id="KOG1721">
    <property type="taxonomic scope" value="Eukaryota"/>
</dbReference>
<dbReference type="GeneTree" id="ENSGT00940000154397"/>
<dbReference type="InParanoid" id="Q86XN6"/>
<dbReference type="OMA" id="YFICHRR"/>
<dbReference type="OrthoDB" id="9509496at2759"/>
<dbReference type="PAN-GO" id="Q86XN6">
    <property type="GO annotations" value="4 GO annotations based on evolutionary models"/>
</dbReference>
<dbReference type="PhylomeDB" id="Q86XN6"/>
<dbReference type="PathwayCommons" id="Q86XN6"/>
<dbReference type="Reactome" id="R-HSA-212436">
    <property type="pathway name" value="Generic Transcription Pathway"/>
</dbReference>
<dbReference type="SignaLink" id="Q86XN6"/>
<dbReference type="BioGRID-ORCS" id="388561">
    <property type="hits" value="4 hits in 165 CRISPR screens"/>
</dbReference>
<dbReference type="GenomeRNAi" id="388561"/>
<dbReference type="Pharos" id="Q86XN6">
    <property type="development level" value="Tdark"/>
</dbReference>
<dbReference type="PRO" id="PR:Q86XN6"/>
<dbReference type="Proteomes" id="UP000005640">
    <property type="component" value="Chromosome 19"/>
</dbReference>
<dbReference type="RNAct" id="Q86XN6">
    <property type="molecule type" value="protein"/>
</dbReference>
<dbReference type="Bgee" id="ENSG00000160336">
    <property type="expression patterns" value="Expressed in prostate gland and 99 other cell types or tissues"/>
</dbReference>
<dbReference type="ExpressionAtlas" id="Q86XN6">
    <property type="expression patterns" value="baseline and differential"/>
</dbReference>
<dbReference type="GO" id="GO:0005634">
    <property type="term" value="C:nucleus"/>
    <property type="evidence" value="ECO:0000318"/>
    <property type="project" value="GO_Central"/>
</dbReference>
<dbReference type="GO" id="GO:0000981">
    <property type="term" value="F:DNA-binding transcription factor activity, RNA polymerase II-specific"/>
    <property type="evidence" value="ECO:0000318"/>
    <property type="project" value="GO_Central"/>
</dbReference>
<dbReference type="GO" id="GO:0000978">
    <property type="term" value="F:RNA polymerase II cis-regulatory region sequence-specific DNA binding"/>
    <property type="evidence" value="ECO:0000318"/>
    <property type="project" value="GO_Central"/>
</dbReference>
<dbReference type="GO" id="GO:0008270">
    <property type="term" value="F:zinc ion binding"/>
    <property type="evidence" value="ECO:0007669"/>
    <property type="project" value="UniProtKB-KW"/>
</dbReference>
<dbReference type="GO" id="GO:0006357">
    <property type="term" value="P:regulation of transcription by RNA polymerase II"/>
    <property type="evidence" value="ECO:0000318"/>
    <property type="project" value="GO_Central"/>
</dbReference>
<dbReference type="CDD" id="cd07765">
    <property type="entry name" value="KRAB_A-box"/>
    <property type="match status" value="1"/>
</dbReference>
<dbReference type="FunFam" id="3.30.160.60:FF:004137">
    <property type="match status" value="1"/>
</dbReference>
<dbReference type="FunFam" id="3.30.160.60:FF:001618">
    <property type="entry name" value="Zinc finger protein 16"/>
    <property type="match status" value="1"/>
</dbReference>
<dbReference type="FunFam" id="3.30.160.60:FF:000745">
    <property type="entry name" value="zinc finger protein 181 isoform X1"/>
    <property type="match status" value="4"/>
</dbReference>
<dbReference type="FunFam" id="3.30.160.60:FF:000034">
    <property type="entry name" value="zinc finger protein 25"/>
    <property type="match status" value="1"/>
</dbReference>
<dbReference type="FunFam" id="3.30.160.60:FF:002343">
    <property type="entry name" value="Zinc finger protein 33A"/>
    <property type="match status" value="2"/>
</dbReference>
<dbReference type="FunFam" id="3.30.160.60:FF:002402">
    <property type="entry name" value="Zinc finger protein 347"/>
    <property type="match status" value="1"/>
</dbReference>
<dbReference type="FunFam" id="3.30.160.60:FF:002090">
    <property type="entry name" value="Zinc finger protein 473"/>
    <property type="match status" value="1"/>
</dbReference>
<dbReference type="FunFam" id="3.30.160.60:FF:002254">
    <property type="entry name" value="Zinc finger protein 540"/>
    <property type="match status" value="1"/>
</dbReference>
<dbReference type="FunFam" id="3.30.160.60:FF:000052">
    <property type="entry name" value="zinc finger protein 546 isoform X1"/>
    <property type="match status" value="1"/>
</dbReference>
<dbReference type="FunFam" id="3.30.160.60:FF:000011">
    <property type="entry name" value="zinc finger protein 615 isoform X1"/>
    <property type="match status" value="2"/>
</dbReference>
<dbReference type="FunFam" id="3.30.160.60:FF:000188">
    <property type="entry name" value="Zinc finger protein 787"/>
    <property type="match status" value="1"/>
</dbReference>
<dbReference type="FunFam" id="3.30.160.60:FF:002289">
    <property type="entry name" value="Zinc finger protein 813"/>
    <property type="match status" value="1"/>
</dbReference>
<dbReference type="FunFam" id="3.30.160.60:FF:002292">
    <property type="entry name" value="Zinc finger protein 816"/>
    <property type="match status" value="1"/>
</dbReference>
<dbReference type="FunFam" id="3.30.160.60:FF:000028">
    <property type="entry name" value="zinc finger protein 90 homolog"/>
    <property type="match status" value="2"/>
</dbReference>
<dbReference type="Gene3D" id="6.10.140.140">
    <property type="match status" value="1"/>
</dbReference>
<dbReference type="Gene3D" id="3.30.160.60">
    <property type="entry name" value="Classic Zinc Finger"/>
    <property type="match status" value="19"/>
</dbReference>
<dbReference type="InterPro" id="IPR001909">
    <property type="entry name" value="KRAB"/>
</dbReference>
<dbReference type="InterPro" id="IPR036051">
    <property type="entry name" value="KRAB_dom_sf"/>
</dbReference>
<dbReference type="InterPro" id="IPR050758">
    <property type="entry name" value="Znf_C2H2-type"/>
</dbReference>
<dbReference type="InterPro" id="IPR036236">
    <property type="entry name" value="Znf_C2H2_sf"/>
</dbReference>
<dbReference type="InterPro" id="IPR013087">
    <property type="entry name" value="Znf_C2H2_type"/>
</dbReference>
<dbReference type="PANTHER" id="PTHR23234:SF10">
    <property type="entry name" value="RIKEN CDNA 6720489N17 GENE-RELATED"/>
    <property type="match status" value="1"/>
</dbReference>
<dbReference type="PANTHER" id="PTHR23234">
    <property type="entry name" value="ZNF44 PROTEIN"/>
    <property type="match status" value="1"/>
</dbReference>
<dbReference type="Pfam" id="PF01352">
    <property type="entry name" value="KRAB"/>
    <property type="match status" value="1"/>
</dbReference>
<dbReference type="Pfam" id="PF00096">
    <property type="entry name" value="zf-C2H2"/>
    <property type="match status" value="11"/>
</dbReference>
<dbReference type="Pfam" id="PF13912">
    <property type="entry name" value="zf-C2H2_6"/>
    <property type="match status" value="2"/>
</dbReference>
<dbReference type="Pfam" id="PF13465">
    <property type="entry name" value="zf-H2C2_2"/>
    <property type="match status" value="1"/>
</dbReference>
<dbReference type="SMART" id="SM00349">
    <property type="entry name" value="KRAB"/>
    <property type="match status" value="1"/>
</dbReference>
<dbReference type="SMART" id="SM00355">
    <property type="entry name" value="ZnF_C2H2"/>
    <property type="match status" value="19"/>
</dbReference>
<dbReference type="SUPFAM" id="SSF57667">
    <property type="entry name" value="beta-beta-alpha zinc fingers"/>
    <property type="match status" value="10"/>
</dbReference>
<dbReference type="SUPFAM" id="SSF109640">
    <property type="entry name" value="KRAB domain (Kruppel-associated box)"/>
    <property type="match status" value="1"/>
</dbReference>
<dbReference type="PROSITE" id="PS50805">
    <property type="entry name" value="KRAB"/>
    <property type="match status" value="1"/>
</dbReference>
<dbReference type="PROSITE" id="PS00028">
    <property type="entry name" value="ZINC_FINGER_C2H2_1"/>
    <property type="match status" value="17"/>
</dbReference>
<dbReference type="PROSITE" id="PS50157">
    <property type="entry name" value="ZINC_FINGER_C2H2_2"/>
    <property type="match status" value="19"/>
</dbReference>
<name>ZN761_HUMAN</name>
<evidence type="ECO:0000250" key="1"/>
<evidence type="ECO:0000255" key="2">
    <source>
        <dbReference type="PROSITE-ProRule" id="PRU00042"/>
    </source>
</evidence>
<evidence type="ECO:0000255" key="3">
    <source>
        <dbReference type="PROSITE-ProRule" id="PRU00119"/>
    </source>
</evidence>
<evidence type="ECO:0000269" key="4">
    <source>
    </source>
</evidence>
<evidence type="ECO:0000269" key="5">
    <source ref="1"/>
</evidence>
<evidence type="ECO:0000305" key="6"/>
<evidence type="ECO:0007744" key="7">
    <source>
    </source>
</evidence>
<accession>Q86XN6</accession>
<accession>A0A087WXT7</accession>
<accession>Q6ZNB9</accession>
<gene>
    <name type="primary">ZNF761</name>
    <name type="synonym">KIAA2033</name>
</gene>
<organism>
    <name type="scientific">Homo sapiens</name>
    <name type="common">Human</name>
    <dbReference type="NCBI Taxonomy" id="9606"/>
    <lineage>
        <taxon>Eukaryota</taxon>
        <taxon>Metazoa</taxon>
        <taxon>Chordata</taxon>
        <taxon>Craniata</taxon>
        <taxon>Vertebrata</taxon>
        <taxon>Euteleostomi</taxon>
        <taxon>Mammalia</taxon>
        <taxon>Eutheria</taxon>
        <taxon>Euarchontoglires</taxon>
        <taxon>Primates</taxon>
        <taxon>Haplorrhini</taxon>
        <taxon>Catarrhini</taxon>
        <taxon>Hominidae</taxon>
        <taxon>Homo</taxon>
    </lineage>
</organism>
<sequence>MAFSQGLLTFRDVAIEFSQEEWKCLDPAQRTLYRDVMLENYRNLVSLDISSKCTMKEFLSTAQGNREVFHAGTLQIHESHHNGDFCYQDVDKDIHDYEFQWQEDERNGHEAPMTKIKKLTGITERYDQSHARNKPIKDQLGSSFHSHLPEMHIFQTEEKIDNQVVKSVHDASLVSTAQRISCRPKTHISNNHGNNFWNSSLLTQKQEVHMREKSFQCNESGKAFNYSSLLRKHQIIHLADKYKCDVCGKLFNQKRNLACHRRCHTGENPYKCNECGKTFSQTSSLTCHRRLHTGEKPYKCEECDKAFHFKSILERHRIIHTEEKPYKCNECGKTFRQKSILTRHHRLHTGEKPYKCNECGKTFSHKSSLTCHHRLHTGEKPYKCNECGKTFSHKSSLTCHRRLHTGEKPYKCEECDKAYSFRSNFEIHRKIHTEDNAYKCNECGKTFSRTSSLTCHRRRHTGEQPYKCEECDKAFRFKSNLERHRRIHTGEKPYKCNECGKTFSRKSYLTCHHRLHTGEKAYKCNECGKTFSWKSSLTCHRRLHSGEKPYKCKECGKTFNQQLTLKRHRRLHSGENPYKCEDSDKAYSFKSNLEIHQKIHTEENPYKCNECGKTFSRTSSLTCHRRLHTGEKPYKCEECDKAFRVKSNLEGHRRIHTGEKPYKCNECGKTFSRKSYFICHHRLHTGEKPYKCNECGKNFSQKSSLICHHRLHTGEKPYKCNECGKTFSQKSNLTCHRRLHTGEKQV</sequence>
<reference key="1">
    <citation type="submission" date="2002-11" db="EMBL/GenBank/DDBJ databases">
        <title>The nucleotide sequence of a long cDNA clone isolated from human.</title>
        <authorList>
            <person name="Nagase T."/>
            <person name="Kikuno R."/>
            <person name="Ohara O."/>
        </authorList>
    </citation>
    <scope>NUCLEOTIDE SEQUENCE [LARGE SCALE MRNA]</scope>
    <scope>VARIANTS SER-122; ILE-168; SER-528; GLN-603 AND VAL-678</scope>
    <source>
        <tissue>Brain</tissue>
    </source>
</reference>
<reference key="2">
    <citation type="journal article" date="2004" name="Nature">
        <title>The DNA sequence and biology of human chromosome 19.</title>
        <authorList>
            <person name="Grimwood J."/>
            <person name="Gordon L.A."/>
            <person name="Olsen A.S."/>
            <person name="Terry A."/>
            <person name="Schmutz J."/>
            <person name="Lamerdin J.E."/>
            <person name="Hellsten U."/>
            <person name="Goodstein D."/>
            <person name="Couronne O."/>
            <person name="Tran-Gyamfi M."/>
            <person name="Aerts A."/>
            <person name="Altherr M."/>
            <person name="Ashworth L."/>
            <person name="Bajorek E."/>
            <person name="Black S."/>
            <person name="Branscomb E."/>
            <person name="Caenepeel S."/>
            <person name="Carrano A.V."/>
            <person name="Caoile C."/>
            <person name="Chan Y.M."/>
            <person name="Christensen M."/>
            <person name="Cleland C.A."/>
            <person name="Copeland A."/>
            <person name="Dalin E."/>
            <person name="Dehal P."/>
            <person name="Denys M."/>
            <person name="Detter J.C."/>
            <person name="Escobar J."/>
            <person name="Flowers D."/>
            <person name="Fotopulos D."/>
            <person name="Garcia C."/>
            <person name="Georgescu A.M."/>
            <person name="Glavina T."/>
            <person name="Gomez M."/>
            <person name="Gonzales E."/>
            <person name="Groza M."/>
            <person name="Hammon N."/>
            <person name="Hawkins T."/>
            <person name="Haydu L."/>
            <person name="Ho I."/>
            <person name="Huang W."/>
            <person name="Israni S."/>
            <person name="Jett J."/>
            <person name="Kadner K."/>
            <person name="Kimball H."/>
            <person name="Kobayashi A."/>
            <person name="Larionov V."/>
            <person name="Leem S.-H."/>
            <person name="Lopez F."/>
            <person name="Lou Y."/>
            <person name="Lowry S."/>
            <person name="Malfatti S."/>
            <person name="Martinez D."/>
            <person name="McCready P.M."/>
            <person name="Medina C."/>
            <person name="Morgan J."/>
            <person name="Nelson K."/>
            <person name="Nolan M."/>
            <person name="Ovcharenko I."/>
            <person name="Pitluck S."/>
            <person name="Pollard M."/>
            <person name="Popkie A.P."/>
            <person name="Predki P."/>
            <person name="Quan G."/>
            <person name="Ramirez L."/>
            <person name="Rash S."/>
            <person name="Retterer J."/>
            <person name="Rodriguez A."/>
            <person name="Rogers S."/>
            <person name="Salamov A."/>
            <person name="Salazar A."/>
            <person name="She X."/>
            <person name="Smith D."/>
            <person name="Slezak T."/>
            <person name="Solovyev V."/>
            <person name="Thayer N."/>
            <person name="Tice H."/>
            <person name="Tsai M."/>
            <person name="Ustaszewska A."/>
            <person name="Vo N."/>
            <person name="Wagner M."/>
            <person name="Wheeler J."/>
            <person name="Wu K."/>
            <person name="Xie G."/>
            <person name="Yang J."/>
            <person name="Dubchak I."/>
            <person name="Furey T.S."/>
            <person name="DeJong P."/>
            <person name="Dickson M."/>
            <person name="Gordon D."/>
            <person name="Eichler E.E."/>
            <person name="Pennacchio L.A."/>
            <person name="Richardson P."/>
            <person name="Stubbs L."/>
            <person name="Rokhsar D.S."/>
            <person name="Myers R.M."/>
            <person name="Rubin E.M."/>
            <person name="Lucas S.M."/>
        </authorList>
    </citation>
    <scope>NUCLEOTIDE SEQUENCE [LARGE SCALE GENOMIC DNA]</scope>
</reference>
<reference key="3">
    <citation type="journal article" date="2004" name="Nat. Genet.">
        <title>Complete sequencing and characterization of 21,243 full-length human cDNAs.</title>
        <authorList>
            <person name="Ota T."/>
            <person name="Suzuki Y."/>
            <person name="Nishikawa T."/>
            <person name="Otsuki T."/>
            <person name="Sugiyama T."/>
            <person name="Irie R."/>
            <person name="Wakamatsu A."/>
            <person name="Hayashi K."/>
            <person name="Sato H."/>
            <person name="Nagai K."/>
            <person name="Kimura K."/>
            <person name="Makita H."/>
            <person name="Sekine M."/>
            <person name="Obayashi M."/>
            <person name="Nishi T."/>
            <person name="Shibahara T."/>
            <person name="Tanaka T."/>
            <person name="Ishii S."/>
            <person name="Yamamoto J."/>
            <person name="Saito K."/>
            <person name="Kawai Y."/>
            <person name="Isono Y."/>
            <person name="Nakamura Y."/>
            <person name="Nagahari K."/>
            <person name="Murakami K."/>
            <person name="Yasuda T."/>
            <person name="Iwayanagi T."/>
            <person name="Wagatsuma M."/>
            <person name="Shiratori A."/>
            <person name="Sudo H."/>
            <person name="Hosoiri T."/>
            <person name="Kaku Y."/>
            <person name="Kodaira H."/>
            <person name="Kondo H."/>
            <person name="Sugawara M."/>
            <person name="Takahashi M."/>
            <person name="Kanda K."/>
            <person name="Yokoi T."/>
            <person name="Furuya T."/>
            <person name="Kikkawa E."/>
            <person name="Omura Y."/>
            <person name="Abe K."/>
            <person name="Kamihara K."/>
            <person name="Katsuta N."/>
            <person name="Sato K."/>
            <person name="Tanikawa M."/>
            <person name="Yamazaki M."/>
            <person name="Ninomiya K."/>
            <person name="Ishibashi T."/>
            <person name="Yamashita H."/>
            <person name="Murakawa K."/>
            <person name="Fujimori K."/>
            <person name="Tanai H."/>
            <person name="Kimata M."/>
            <person name="Watanabe M."/>
            <person name="Hiraoka S."/>
            <person name="Chiba Y."/>
            <person name="Ishida S."/>
            <person name="Ono Y."/>
            <person name="Takiguchi S."/>
            <person name="Watanabe S."/>
            <person name="Yosida M."/>
            <person name="Hotuta T."/>
            <person name="Kusano J."/>
            <person name="Kanehori K."/>
            <person name="Takahashi-Fujii A."/>
            <person name="Hara H."/>
            <person name="Tanase T.-O."/>
            <person name="Nomura Y."/>
            <person name="Togiya S."/>
            <person name="Komai F."/>
            <person name="Hara R."/>
            <person name="Takeuchi K."/>
            <person name="Arita M."/>
            <person name="Imose N."/>
            <person name="Musashino K."/>
            <person name="Yuuki H."/>
            <person name="Oshima A."/>
            <person name="Sasaki N."/>
            <person name="Aotsuka S."/>
            <person name="Yoshikawa Y."/>
            <person name="Matsunawa H."/>
            <person name="Ichihara T."/>
            <person name="Shiohata N."/>
            <person name="Sano S."/>
            <person name="Moriya S."/>
            <person name="Momiyama H."/>
            <person name="Satoh N."/>
            <person name="Takami S."/>
            <person name="Terashima Y."/>
            <person name="Suzuki O."/>
            <person name="Nakagawa S."/>
            <person name="Senoh A."/>
            <person name="Mizoguchi H."/>
            <person name="Goto Y."/>
            <person name="Shimizu F."/>
            <person name="Wakebe H."/>
            <person name="Hishigaki H."/>
            <person name="Watanabe T."/>
            <person name="Sugiyama A."/>
            <person name="Takemoto M."/>
            <person name="Kawakami B."/>
            <person name="Yamazaki M."/>
            <person name="Watanabe K."/>
            <person name="Kumagai A."/>
            <person name="Itakura S."/>
            <person name="Fukuzumi Y."/>
            <person name="Fujimori Y."/>
            <person name="Komiyama M."/>
            <person name="Tashiro H."/>
            <person name="Tanigami A."/>
            <person name="Fujiwara T."/>
            <person name="Ono T."/>
            <person name="Yamada K."/>
            <person name="Fujii Y."/>
            <person name="Ozaki K."/>
            <person name="Hirao M."/>
            <person name="Ohmori Y."/>
            <person name="Kawabata A."/>
            <person name="Hikiji T."/>
            <person name="Kobatake N."/>
            <person name="Inagaki H."/>
            <person name="Ikema Y."/>
            <person name="Okamoto S."/>
            <person name="Okitani R."/>
            <person name="Kawakami T."/>
            <person name="Noguchi S."/>
            <person name="Itoh T."/>
            <person name="Shigeta K."/>
            <person name="Senba T."/>
            <person name="Matsumura K."/>
            <person name="Nakajima Y."/>
            <person name="Mizuno T."/>
            <person name="Morinaga M."/>
            <person name="Sasaki M."/>
            <person name="Togashi T."/>
            <person name="Oyama M."/>
            <person name="Hata H."/>
            <person name="Watanabe M."/>
            <person name="Komatsu T."/>
            <person name="Mizushima-Sugano J."/>
            <person name="Satoh T."/>
            <person name="Shirai Y."/>
            <person name="Takahashi Y."/>
            <person name="Nakagawa K."/>
            <person name="Okumura K."/>
            <person name="Nagase T."/>
            <person name="Nomura N."/>
            <person name="Kikuchi H."/>
            <person name="Masuho Y."/>
            <person name="Yamashita R."/>
            <person name="Nakai K."/>
            <person name="Yada T."/>
            <person name="Nakamura Y."/>
            <person name="Ohara O."/>
            <person name="Isogai T."/>
            <person name="Sugano S."/>
        </authorList>
    </citation>
    <scope>NUCLEOTIDE SEQUENCE [LARGE SCALE MRNA] OF 48-746</scope>
    <scope>VARIANTS SER-122 AND ILE-168</scope>
    <source>
        <tissue>Brain</tissue>
    </source>
</reference>
<reference key="4">
    <citation type="journal article" date="2017" name="Nat. Struct. Mol. Biol.">
        <title>Site-specific mapping of the human SUMO proteome reveals co-modification with phosphorylation.</title>
        <authorList>
            <person name="Hendriks I.A."/>
            <person name="Lyon D."/>
            <person name="Young C."/>
            <person name="Jensen L.J."/>
            <person name="Vertegaal A.C."/>
            <person name="Nielsen M.L."/>
        </authorList>
    </citation>
    <scope>SUMOYLATION [LARGE SCALE ANALYSIS] AT LYS-205</scope>
    <scope>IDENTIFICATION BY MASS SPECTROMETRY [LARGE SCALE ANALYSIS]</scope>
</reference>
<protein>
    <recommendedName>
        <fullName>Zinc finger protein 761</fullName>
    </recommendedName>
</protein>
<keyword id="KW-0238">DNA-binding</keyword>
<keyword id="KW-1017">Isopeptide bond</keyword>
<keyword id="KW-0479">Metal-binding</keyword>
<keyword id="KW-0539">Nucleus</keyword>
<keyword id="KW-1267">Proteomics identification</keyword>
<keyword id="KW-1185">Reference proteome</keyword>
<keyword id="KW-0677">Repeat</keyword>
<keyword id="KW-0804">Transcription</keyword>
<keyword id="KW-0805">Transcription regulation</keyword>
<keyword id="KW-0832">Ubl conjugation</keyword>
<keyword id="KW-0862">Zinc</keyword>
<keyword id="KW-0863">Zinc-finger</keyword>